<keyword id="KW-0165">Cleavage on pair of basic residues</keyword>
<keyword id="KW-1015">Disulfide bond</keyword>
<keyword id="KW-0895">ERV</keyword>
<keyword id="KW-0325">Glycoprotein</keyword>
<keyword id="KW-1185">Reference proteome</keyword>
<keyword id="KW-0732">Signal</keyword>
<keyword id="KW-0814">Transposable element</keyword>
<keyword id="KW-0261">Viral envelope protein</keyword>
<keyword id="KW-0946">Virion</keyword>
<proteinExistence type="inferred from homology"/>
<accession>P61559</accession>
<evidence type="ECO:0000250" key="1"/>
<evidence type="ECO:0000255" key="2"/>
<evidence type="ECO:0000305" key="3"/>
<protein>
    <recommendedName>
        <fullName>ERV-H1 provirus ancestral Env polyprotein</fullName>
    </recommendedName>
    <alternativeName>
        <fullName>ERV-H/env62</fullName>
    </alternativeName>
    <alternativeName>
        <fullName>Envelope polyprotein</fullName>
        <shortName>Env protein</shortName>
    </alternativeName>
    <component>
        <recommendedName>
            <fullName>Surface protein</fullName>
            <shortName>SU</shortName>
        </recommendedName>
    </component>
    <component>
        <recommendedName>
            <fullName>Transmembrane protein</fullName>
            <shortName>TM</shortName>
        </recommendedName>
    </component>
</protein>
<name>ENH1_PANTR</name>
<organism>
    <name type="scientific">Pan troglodytes</name>
    <name type="common">Chimpanzee</name>
    <dbReference type="NCBI Taxonomy" id="9598"/>
    <lineage>
        <taxon>Eukaryota</taxon>
        <taxon>Metazoa</taxon>
        <taxon>Chordata</taxon>
        <taxon>Craniata</taxon>
        <taxon>Vertebrata</taxon>
        <taxon>Euteleostomi</taxon>
        <taxon>Mammalia</taxon>
        <taxon>Eutheria</taxon>
        <taxon>Euarchontoglires</taxon>
        <taxon>Primates</taxon>
        <taxon>Haplorrhini</taxon>
        <taxon>Catarrhini</taxon>
        <taxon>Hominidae</taxon>
        <taxon>Pan</taxon>
    </lineage>
</organism>
<sequence length="457" mass="49843">MIFAGKAPSNTSTLMKFYSLILYSLLFSFPFLCHPLPLPSYLHHTINLTHSLLAASNPSLANNCWLCISLSSSAYTAVPALQTDRATSPVSLHLQTSFNSPHLYPPEELIYFLDRSIKTSPDISHQQAAALLHTYLKHLSPYINSTPPIFGPLTTQTTIPVAAPLCISRRRPTGIPLGNLSPSRCSFTLHLRSPTTNITETIGAFQLHITDKPSINTDKLKNISSHYCLGRHLPCISLHPWLPSPCSSDCPPRPSSCLLIPSPENNSESLLVDTRRFLIHHENRTSPSTQLPHQSPLQPLTAAALAGSLGVWIQDTPFSTPSHLFTLHLQFCLAQGLFFLCGSSNYMCLPANWTGTCTLVFLTPKIQFANGTEELPVPLMTPTRQKRVIPLIPLMFGLGLSASTIALSTGIAGISTSVMTFRSLSNDFSASITDISQTLSVLQAQVDSLAAVVLQNR</sequence>
<reference key="1">
    <citation type="journal article" date="2001" name="Virology">
        <title>Characterization of the three HERV-H proviruses with an open envelope reading frame encompassing the immunosuppressive domain and evolutionary history in primates.</title>
        <authorList>
            <person name="de Parseval N."/>
            <person name="Casella J.-F."/>
            <person name="Gressin L."/>
            <person name="Heidmann T."/>
        </authorList>
    </citation>
    <scope>NUCLEOTIDE SEQUENCE</scope>
</reference>
<comment type="function">
    <text>Retroviral envelope proteins mediate receptor recognition and membrane fusion during early infection. Endogenous envelope proteins may have kept, lost or modified their original function during evolution.</text>
</comment>
<comment type="function">
    <text evidence="1">SU mediates receptor recognition.</text>
</comment>
<comment type="function">
    <text evidence="1">TM anchors the envelope heterodimer to the viral membrane through one transmembrane domain. The other hydrophobic domain, called fusion peptide, mediates fusion of the viral membrane with the target cell membrane (By similarity).</text>
</comment>
<comment type="subunit">
    <text evidence="1">The surface (SU) and transmembrane (TM) proteins form a heterodimer. SU and TM are attached by noncovalent interactions or by a labile interchain disulfide bond (By similarity).</text>
</comment>
<comment type="subcellular location">
    <subcellularLocation>
        <location>Virion</location>
    </subcellularLocation>
</comment>
<comment type="domain">
    <text evidence="1">The CKS-17 immunosuppressive domain is present in many retroviral envelope proteins. As a synthetic peptide, it inhibits immune function in vitro and in vivo (By similarity).</text>
</comment>
<comment type="PTM">
    <text evidence="1">Specific enzymatic cleavages in vivo yield the mature SU and TM proteins.</text>
</comment>
<comment type="PTM">
    <text evidence="1">The CXXC motif is highly conserved across a broad range of retroviral envelope proteins. It is thought to participate in the formation of a labile disulfide bond possibly with the CX6CC motif present in the transmembrane protein (By similarity).</text>
</comment>
<comment type="miscellaneous">
    <text>Ortholog of the human HERV-H_2q24.3 envelope protein.</text>
</comment>
<comment type="similarity">
    <text evidence="3">Belongs to the gamma type-C retroviral envelope protein family. HERV class-I H env subfamily.</text>
</comment>
<comment type="caution">
    <text evidence="3">Truncated; premature stop codon upstream of the potential transmembrane domain.</text>
</comment>
<dbReference type="SMR" id="P61559"/>
<dbReference type="InParanoid" id="P61559"/>
<dbReference type="Proteomes" id="UP000002277">
    <property type="component" value="Unplaced"/>
</dbReference>
<dbReference type="Gene3D" id="1.10.287.210">
    <property type="match status" value="1"/>
</dbReference>
<dbReference type="InterPro" id="IPR018154">
    <property type="entry name" value="TLV/ENV_coat_polyprotein"/>
</dbReference>
<dbReference type="PANTHER" id="PTHR10424:SF60">
    <property type="entry name" value="HERV-H_2Q24.1 PROVIRUS ANCESTRAL ENV POLYPROTEIN-RELATED"/>
    <property type="match status" value="1"/>
</dbReference>
<dbReference type="PANTHER" id="PTHR10424">
    <property type="entry name" value="VIRAL ENVELOPE PROTEIN"/>
    <property type="match status" value="1"/>
</dbReference>
<dbReference type="Pfam" id="PF00429">
    <property type="entry name" value="TLV_coat"/>
    <property type="match status" value="2"/>
</dbReference>
<dbReference type="SUPFAM" id="SSF58069">
    <property type="entry name" value="Virus ectodomain"/>
    <property type="match status" value="1"/>
</dbReference>
<feature type="signal peptide" evidence="2">
    <location>
        <begin position="1"/>
        <end position="35"/>
    </location>
</feature>
<feature type="chain" id="PRO_0000008463" description="ERV-H1 provirus ancestral Env polyprotein">
    <location>
        <begin position="36"/>
        <end position="457"/>
    </location>
</feature>
<feature type="chain" id="PRO_0000008464" description="Surface protein" evidence="1">
    <location>
        <begin position="36"/>
        <end position="387"/>
    </location>
</feature>
<feature type="chain" id="PRO_0000008465" description="Transmembrane protein" evidence="1">
    <location>
        <begin position="388"/>
        <end position="457"/>
    </location>
</feature>
<feature type="region of interest" description="Fusion peptide" evidence="2">
    <location>
        <begin position="388"/>
        <end position="408"/>
    </location>
</feature>
<feature type="short sequence motif" description="CXXC" evidence="1">
    <location>
        <begin position="64"/>
        <end position="67"/>
    </location>
</feature>
<feature type="site" description="Cleavage" evidence="1">
    <location>
        <begin position="387"/>
        <end position="388"/>
    </location>
</feature>
<feature type="glycosylation site" description="N-linked (GlcNAc...) asparagine" evidence="2">
    <location>
        <position position="10"/>
    </location>
</feature>
<feature type="glycosylation site" description="N-linked (GlcNAc...) asparagine" evidence="2">
    <location>
        <position position="47"/>
    </location>
</feature>
<feature type="glycosylation site" description="N-linked (GlcNAc...) asparagine" evidence="2">
    <location>
        <position position="197"/>
    </location>
</feature>
<feature type="glycosylation site" description="N-linked (GlcNAc...) asparagine" evidence="2">
    <location>
        <position position="222"/>
    </location>
</feature>
<feature type="glycosylation site" description="N-linked (GlcNAc...) asparagine" evidence="2">
    <location>
        <position position="265"/>
    </location>
</feature>
<feature type="glycosylation site" description="N-linked (GlcNAc...) asparagine" evidence="2">
    <location>
        <position position="283"/>
    </location>
</feature>
<feature type="glycosylation site" description="N-linked (GlcNAc...) asparagine" evidence="2">
    <location>
        <position position="352"/>
    </location>
</feature>
<feature type="glycosylation site" description="N-linked (GlcNAc...) asparagine" evidence="2">
    <location>
        <position position="370"/>
    </location>
</feature>